<keyword id="KW-0007">Acetylation</keyword>
<keyword id="KW-0158">Chromosome</keyword>
<keyword id="KW-0963">Cytoplasm</keyword>
<keyword id="KW-0226">DNA condensation</keyword>
<keyword id="KW-0238">DNA-binding</keyword>
<keyword id="KW-1185">Reference proteome</keyword>
<name>ALBA_NANEQ</name>
<sequence length="90" mass="10015">MPEVFIGKKPLTNYVMAVVMQFMQGANEVVIKARGRNISRAVDVAERVRKRFLAGQVDVGDIKIDSEEVVDPATGQKRTVSTIEIKLVKK</sequence>
<accession>P60851</accession>
<comment type="function">
    <text evidence="1">Binds double-stranded DNA tightly but without sequence specificity. Involved in DNA compaction.</text>
</comment>
<comment type="subcellular location">
    <subcellularLocation>
        <location evidence="1">Cytoplasm</location>
    </subcellularLocation>
    <subcellularLocation>
        <location evidence="1">Chromosome</location>
    </subcellularLocation>
</comment>
<comment type="PTM">
    <text evidence="1">Acetylated. Acetylation at Lys-8 decreases DNA-binding affinity.</text>
</comment>
<comment type="similarity">
    <text evidence="1">Belongs to the histone-like Alba family.</text>
</comment>
<feature type="chain" id="PRO_0000151703" description="DNA/RNA-binding protein Alba">
    <location>
        <begin position="1"/>
        <end position="90"/>
    </location>
</feature>
<feature type="modified residue" description="N6-acetyllysine" evidence="1">
    <location>
        <position position="8"/>
    </location>
</feature>
<organism>
    <name type="scientific">Nanoarchaeum equitans (strain Kin4-M)</name>
    <dbReference type="NCBI Taxonomy" id="228908"/>
    <lineage>
        <taxon>Archaea</taxon>
        <taxon>Nanobdellota</taxon>
        <taxon>Candidatus Nanoarchaeia</taxon>
        <taxon>Nanoarchaeales</taxon>
        <taxon>Nanoarchaeaceae</taxon>
        <taxon>Nanoarchaeum</taxon>
    </lineage>
</organism>
<evidence type="ECO:0000255" key="1">
    <source>
        <dbReference type="HAMAP-Rule" id="MF_01122"/>
    </source>
</evidence>
<proteinExistence type="inferred from homology"/>
<protein>
    <recommendedName>
        <fullName evidence="1">DNA/RNA-binding protein Alba</fullName>
    </recommendedName>
</protein>
<gene>
    <name evidence="1" type="primary">albA</name>
    <name type="ordered locus">NEQ363</name>
</gene>
<reference key="1">
    <citation type="journal article" date="2003" name="Proc. Natl. Acad. Sci. U.S.A.">
        <title>The genome of Nanoarchaeum equitans: insights into early archaeal evolution and derived parasitism.</title>
        <authorList>
            <person name="Waters E."/>
            <person name="Hohn M.J."/>
            <person name="Ahel I."/>
            <person name="Graham D.E."/>
            <person name="Adams M.D."/>
            <person name="Barnstead M."/>
            <person name="Beeson K.Y."/>
            <person name="Bibbs L."/>
            <person name="Bolanos R."/>
            <person name="Keller M."/>
            <person name="Kretz K."/>
            <person name="Lin X."/>
            <person name="Mathur E."/>
            <person name="Ni J."/>
            <person name="Podar M."/>
            <person name="Richardson T."/>
            <person name="Sutton G.G."/>
            <person name="Simon M."/>
            <person name="Soell D."/>
            <person name="Stetter K.O."/>
            <person name="Short J.M."/>
            <person name="Noorderwier M."/>
        </authorList>
    </citation>
    <scope>NUCLEOTIDE SEQUENCE [LARGE SCALE GENOMIC DNA]</scope>
    <source>
        <strain>Kin4-M</strain>
    </source>
</reference>
<dbReference type="EMBL" id="AE017199">
    <property type="protein sequence ID" value="AAR39212.1"/>
    <property type="molecule type" value="Genomic_DNA"/>
</dbReference>
<dbReference type="SMR" id="P60851"/>
<dbReference type="STRING" id="228908.NEQ363"/>
<dbReference type="EnsemblBacteria" id="AAR39212">
    <property type="protein sequence ID" value="AAR39212"/>
    <property type="gene ID" value="NEQ363"/>
</dbReference>
<dbReference type="KEGG" id="neq:NEQ363"/>
<dbReference type="PATRIC" id="fig|228908.8.peg.373"/>
<dbReference type="HOGENOM" id="CLU_110989_1_0_2"/>
<dbReference type="Proteomes" id="UP000000578">
    <property type="component" value="Chromosome"/>
</dbReference>
<dbReference type="GO" id="GO:0005694">
    <property type="term" value="C:chromosome"/>
    <property type="evidence" value="ECO:0007669"/>
    <property type="project" value="UniProtKB-SubCell"/>
</dbReference>
<dbReference type="GO" id="GO:0005737">
    <property type="term" value="C:cytoplasm"/>
    <property type="evidence" value="ECO:0007669"/>
    <property type="project" value="UniProtKB-SubCell"/>
</dbReference>
<dbReference type="GO" id="GO:0003690">
    <property type="term" value="F:double-stranded DNA binding"/>
    <property type="evidence" value="ECO:0007669"/>
    <property type="project" value="UniProtKB-UniRule"/>
</dbReference>
<dbReference type="GO" id="GO:0003723">
    <property type="term" value="F:RNA binding"/>
    <property type="evidence" value="ECO:0007669"/>
    <property type="project" value="InterPro"/>
</dbReference>
<dbReference type="GO" id="GO:0030261">
    <property type="term" value="P:chromosome condensation"/>
    <property type="evidence" value="ECO:0007669"/>
    <property type="project" value="UniProtKB-KW"/>
</dbReference>
<dbReference type="Gene3D" id="3.30.110.20">
    <property type="entry name" value="Alba-like domain"/>
    <property type="match status" value="1"/>
</dbReference>
<dbReference type="HAMAP" id="MF_01122">
    <property type="entry name" value="AlbA"/>
    <property type="match status" value="1"/>
</dbReference>
<dbReference type="InterPro" id="IPR036882">
    <property type="entry name" value="Alba-like_dom_sf"/>
</dbReference>
<dbReference type="InterPro" id="IPR013795">
    <property type="entry name" value="DNA/RNA-bd_Alba"/>
</dbReference>
<dbReference type="InterPro" id="IPR002775">
    <property type="entry name" value="DNA/RNA-bd_Alba-like"/>
</dbReference>
<dbReference type="NCBIfam" id="TIGR00285">
    <property type="entry name" value="DNA-binding protein Alba"/>
    <property type="match status" value="1"/>
</dbReference>
<dbReference type="NCBIfam" id="NF003088">
    <property type="entry name" value="PRK04015.1"/>
    <property type="match status" value="1"/>
</dbReference>
<dbReference type="Pfam" id="PF01918">
    <property type="entry name" value="Alba"/>
    <property type="match status" value="1"/>
</dbReference>
<dbReference type="PIRSF" id="PIRSF028732">
    <property type="entry name" value="Alba"/>
    <property type="match status" value="1"/>
</dbReference>
<dbReference type="SUPFAM" id="SSF82704">
    <property type="entry name" value="AlbA-like"/>
    <property type="match status" value="1"/>
</dbReference>